<evidence type="ECO:0000250" key="1">
    <source>
        <dbReference type="UniProtKB" id="P69828"/>
    </source>
</evidence>
<evidence type="ECO:0000255" key="2">
    <source>
        <dbReference type="PROSITE-ProRule" id="PRU00417"/>
    </source>
</evidence>
<evidence type="ECO:0000305" key="3"/>
<protein>
    <recommendedName>
        <fullName evidence="1">PTS system galactitol-specific EIIA component</fullName>
    </recommendedName>
    <alternativeName>
        <fullName evidence="1">EIIB-Gat</fullName>
    </alternativeName>
    <alternativeName>
        <fullName evidence="1">Galactitol-specific phosphotransferase enzyme IIA component</fullName>
    </alternativeName>
</protein>
<feature type="chain" id="PRO_0000186578" description="PTS system galactitol-specific EIIA component">
    <location>
        <begin position="1"/>
        <end position="150"/>
    </location>
</feature>
<feature type="domain" description="PTS EIIA type-2" evidence="2">
    <location>
        <begin position="1"/>
        <end position="144"/>
    </location>
</feature>
<feature type="active site" description="Tele-phosphohistidine intermediate" evidence="2">
    <location>
        <position position="62"/>
    </location>
</feature>
<feature type="modified residue" description="Phosphohistidine; by HPr" evidence="3">
    <location>
        <position position="62"/>
    </location>
</feature>
<gene>
    <name type="primary">gatA</name>
    <name type="ordered locus">Z3257</name>
    <name type="ordered locus">ECs2897</name>
</gene>
<reference key="1">
    <citation type="journal article" date="2001" name="Nature">
        <title>Genome sequence of enterohaemorrhagic Escherichia coli O157:H7.</title>
        <authorList>
            <person name="Perna N.T."/>
            <person name="Plunkett G. III"/>
            <person name="Burland V."/>
            <person name="Mau B."/>
            <person name="Glasner J.D."/>
            <person name="Rose D.J."/>
            <person name="Mayhew G.F."/>
            <person name="Evans P.S."/>
            <person name="Gregor J."/>
            <person name="Kirkpatrick H.A."/>
            <person name="Posfai G."/>
            <person name="Hackett J."/>
            <person name="Klink S."/>
            <person name="Boutin A."/>
            <person name="Shao Y."/>
            <person name="Miller L."/>
            <person name="Grotbeck E.J."/>
            <person name="Davis N.W."/>
            <person name="Lim A."/>
            <person name="Dimalanta E.T."/>
            <person name="Potamousis K."/>
            <person name="Apodaca J."/>
            <person name="Anantharaman T.S."/>
            <person name="Lin J."/>
            <person name="Yen G."/>
            <person name="Schwartz D.C."/>
            <person name="Welch R.A."/>
            <person name="Blattner F.R."/>
        </authorList>
    </citation>
    <scope>NUCLEOTIDE SEQUENCE [LARGE SCALE GENOMIC DNA]</scope>
    <source>
        <strain>O157:H7 / EDL933 / ATCC 700927 / EHEC</strain>
    </source>
</reference>
<reference key="2">
    <citation type="journal article" date="2001" name="DNA Res.">
        <title>Complete genome sequence of enterohemorrhagic Escherichia coli O157:H7 and genomic comparison with a laboratory strain K-12.</title>
        <authorList>
            <person name="Hayashi T."/>
            <person name="Makino K."/>
            <person name="Ohnishi M."/>
            <person name="Kurokawa K."/>
            <person name="Ishii K."/>
            <person name="Yokoyama K."/>
            <person name="Han C.-G."/>
            <person name="Ohtsubo E."/>
            <person name="Nakayama K."/>
            <person name="Murata T."/>
            <person name="Tanaka M."/>
            <person name="Tobe T."/>
            <person name="Iida T."/>
            <person name="Takami H."/>
            <person name="Honda T."/>
            <person name="Sasakawa C."/>
            <person name="Ogasawara N."/>
            <person name="Yasunaga T."/>
            <person name="Kuhara S."/>
            <person name="Shiba T."/>
            <person name="Hattori M."/>
            <person name="Shinagawa H."/>
        </authorList>
    </citation>
    <scope>NUCLEOTIDE SEQUENCE [LARGE SCALE GENOMIC DNA]</scope>
    <source>
        <strain>O157:H7 / Sakai / RIMD 0509952 / EHEC</strain>
    </source>
</reference>
<dbReference type="EMBL" id="AE005174">
    <property type="protein sequence ID" value="AAG57151.1"/>
    <property type="molecule type" value="Genomic_DNA"/>
</dbReference>
<dbReference type="EMBL" id="BA000007">
    <property type="protein sequence ID" value="BAB36320.1"/>
    <property type="molecule type" value="Genomic_DNA"/>
</dbReference>
<dbReference type="PIR" id="A90991">
    <property type="entry name" value="A90991"/>
</dbReference>
<dbReference type="PIR" id="C85836">
    <property type="entry name" value="C85836"/>
</dbReference>
<dbReference type="RefSeq" id="NP_310924.1">
    <property type="nucleotide sequence ID" value="NC_002695.1"/>
</dbReference>
<dbReference type="RefSeq" id="WP_000182899.1">
    <property type="nucleotide sequence ID" value="NZ_VOAI01000013.1"/>
</dbReference>
<dbReference type="SMR" id="P69814"/>
<dbReference type="STRING" id="155864.Z3257"/>
<dbReference type="GeneID" id="75172215"/>
<dbReference type="GeneID" id="916599"/>
<dbReference type="KEGG" id="ece:Z3257"/>
<dbReference type="KEGG" id="ecs:ECs_2897"/>
<dbReference type="PATRIC" id="fig|386585.9.peg.3029"/>
<dbReference type="eggNOG" id="COG1762">
    <property type="taxonomic scope" value="Bacteria"/>
</dbReference>
<dbReference type="HOGENOM" id="CLU_072531_6_2_6"/>
<dbReference type="OMA" id="FADYHEA"/>
<dbReference type="Proteomes" id="UP000000558">
    <property type="component" value="Chromosome"/>
</dbReference>
<dbReference type="Proteomes" id="UP000002519">
    <property type="component" value="Chromosome"/>
</dbReference>
<dbReference type="GO" id="GO:0005737">
    <property type="term" value="C:cytoplasm"/>
    <property type="evidence" value="ECO:0007669"/>
    <property type="project" value="UniProtKB-SubCell"/>
</dbReference>
<dbReference type="GO" id="GO:0016301">
    <property type="term" value="F:kinase activity"/>
    <property type="evidence" value="ECO:0007669"/>
    <property type="project" value="UniProtKB-KW"/>
</dbReference>
<dbReference type="GO" id="GO:0030295">
    <property type="term" value="F:protein kinase activator activity"/>
    <property type="evidence" value="ECO:0007669"/>
    <property type="project" value="TreeGrafter"/>
</dbReference>
<dbReference type="GO" id="GO:0019402">
    <property type="term" value="P:galactitol metabolic process"/>
    <property type="evidence" value="ECO:0007669"/>
    <property type="project" value="UniProtKB-KW"/>
</dbReference>
<dbReference type="GO" id="GO:0009401">
    <property type="term" value="P:phosphoenolpyruvate-dependent sugar phosphotransferase system"/>
    <property type="evidence" value="ECO:0007669"/>
    <property type="project" value="UniProtKB-KW"/>
</dbReference>
<dbReference type="CDD" id="cd00211">
    <property type="entry name" value="PTS_IIA_fru"/>
    <property type="match status" value="1"/>
</dbReference>
<dbReference type="FunFam" id="3.40.930.10:FF:000016">
    <property type="entry name" value="Galactitol-specific enzyme IIA of phosphotransferase system"/>
    <property type="match status" value="1"/>
</dbReference>
<dbReference type="Gene3D" id="3.40.930.10">
    <property type="entry name" value="Mannitol-specific EII, Chain A"/>
    <property type="match status" value="1"/>
</dbReference>
<dbReference type="InterPro" id="IPR016152">
    <property type="entry name" value="PTrfase/Anion_transptr"/>
</dbReference>
<dbReference type="InterPro" id="IPR002178">
    <property type="entry name" value="PTS_EIIA_type-2_dom"/>
</dbReference>
<dbReference type="InterPro" id="IPR051541">
    <property type="entry name" value="PTS_SugarTrans_NitroReg"/>
</dbReference>
<dbReference type="NCBIfam" id="NF007236">
    <property type="entry name" value="PRK09665.1"/>
    <property type="match status" value="1"/>
</dbReference>
<dbReference type="PANTHER" id="PTHR47738">
    <property type="entry name" value="PTS SYSTEM FRUCTOSE-LIKE EIIA COMPONENT-RELATED"/>
    <property type="match status" value="1"/>
</dbReference>
<dbReference type="PANTHER" id="PTHR47738:SF4">
    <property type="entry name" value="PTS SYSTEM GALACTITOL-SPECIFIC EIIA COMPONENT"/>
    <property type="match status" value="1"/>
</dbReference>
<dbReference type="Pfam" id="PF00359">
    <property type="entry name" value="PTS_EIIA_2"/>
    <property type="match status" value="1"/>
</dbReference>
<dbReference type="SUPFAM" id="SSF55804">
    <property type="entry name" value="Phoshotransferase/anion transport protein"/>
    <property type="match status" value="1"/>
</dbReference>
<dbReference type="PROSITE" id="PS51094">
    <property type="entry name" value="PTS_EIIA_TYPE_2"/>
    <property type="match status" value="1"/>
</dbReference>
<sequence length="150" mass="16907">MTNLFVRSGISFVDRSEVLTHIGNEMLAKGVVHDTWPQALIAREAEFPTGIMLEQHAIAIPHCEAIHAKSSAIYLLRPTNKVHFQQADDDNDVAVSLVIALIVENPQQQLKLLRCLFGKLQQPDIVETLITLPETQLKEYFTKYVLDSDE</sequence>
<accession>P69814</accession>
<accession>P37187</accession>
<accession>P76413</accession>
<name>PTKA_ECO57</name>
<proteinExistence type="inferred from homology"/>
<comment type="function">
    <text evidence="1">The phosphoenolpyruvate-dependent sugar phosphotransferase system (sugar PTS), a major carbohydrate active transport system, catalyzes the phosphorylation of incoming sugar substrates concomitantly with their translocation across the cell membrane. The enzyme II complex composed of GatA, GatB and GatC is involved in galactitol transport.</text>
</comment>
<comment type="subunit">
    <text evidence="1">Forms a complex with one each of subunit of GatA, GatB and 2 subunits of GatC.</text>
</comment>
<comment type="subcellular location">
    <subcellularLocation>
        <location evidence="3">Cytoplasm</location>
    </subcellularLocation>
</comment>
<comment type="induction">
    <text evidence="1">Constitutively expressed.</text>
</comment>
<comment type="domain">
    <text evidence="2">The EIIA domain is phosphorylated by phospho-HPr on a histidyl residue. Then, it transfers the phosphoryl group to the EIIB domain.</text>
</comment>
<organism>
    <name type="scientific">Escherichia coli O157:H7</name>
    <dbReference type="NCBI Taxonomy" id="83334"/>
    <lineage>
        <taxon>Bacteria</taxon>
        <taxon>Pseudomonadati</taxon>
        <taxon>Pseudomonadota</taxon>
        <taxon>Gammaproteobacteria</taxon>
        <taxon>Enterobacterales</taxon>
        <taxon>Enterobacteriaceae</taxon>
        <taxon>Escherichia</taxon>
    </lineage>
</organism>
<keyword id="KW-0963">Cytoplasm</keyword>
<keyword id="KW-0298">Galactitol metabolism</keyword>
<keyword id="KW-0418">Kinase</keyword>
<keyword id="KW-0597">Phosphoprotein</keyword>
<keyword id="KW-0598">Phosphotransferase system</keyword>
<keyword id="KW-1185">Reference proteome</keyword>
<keyword id="KW-0762">Sugar transport</keyword>
<keyword id="KW-0808">Transferase</keyword>
<keyword id="KW-0813">Transport</keyword>